<evidence type="ECO:0000255" key="1">
    <source>
        <dbReference type="PROSITE-ProRule" id="PRU00218"/>
    </source>
</evidence>
<evidence type="ECO:0000256" key="2">
    <source>
        <dbReference type="SAM" id="MobiDB-lite"/>
    </source>
</evidence>
<evidence type="ECO:0000269" key="3">
    <source>
    </source>
</evidence>
<evidence type="ECO:0000303" key="4">
    <source>
    </source>
</evidence>
<evidence type="ECO:0000305" key="5"/>
<evidence type="ECO:0000312" key="6">
    <source>
        <dbReference type="Araport" id="AT3G16270"/>
    </source>
</evidence>
<evidence type="ECO:0000312" key="7">
    <source>
        <dbReference type="EMBL" id="AAB63649.1"/>
    </source>
</evidence>
<evidence type="ECO:0007829" key="8">
    <source>
        <dbReference type="PDB" id="1VDY"/>
    </source>
</evidence>
<evidence type="ECO:0007829" key="9">
    <source>
        <dbReference type="PDB" id="2DCP"/>
    </source>
</evidence>
<comment type="function">
    <text evidence="3">Mediates clathrin-dependent trafficking of vacuolar cargo from the trans-Golgi network (TGN). Promotes plant growth.</text>
</comment>
<comment type="subunit">
    <text evidence="3">Binds to clathrin heavy chain.</text>
</comment>
<comment type="subcellular location">
    <subcellularLocation>
        <location evidence="3">Golgi apparatus</location>
        <location evidence="3">trans-Golgi network</location>
    </subcellularLocation>
    <subcellularLocation>
        <location evidence="3">Cytoplasmic vesicle</location>
        <location evidence="3">Clathrin-coated vesicle</location>
    </subcellularLocation>
    <text evidence="3">Colocalizes with clathrin at the trans-Golgi network (TGN).</text>
</comment>
<comment type="alternative products">
    <event type="alternative splicing"/>
    <isoform>
        <id>Q9C5H4-1</id>
        <name>1</name>
        <sequence type="displayed"/>
    </isoform>
    <isoform>
        <id>Q9C5H4-2</id>
        <name>2</name>
        <sequence type="described" ref="VSP_059635"/>
    </isoform>
</comment>
<comment type="tissue specificity">
    <text evidence="3">Expressed in inflorescence stems, stigmas, roots, roots meristems, embryos, and floral and leaf vasculatures, but absent from the floral abscission zone.</text>
</comment>
<comment type="developmental stage">
    <text evidence="3">Strongly expressed in developing and mature embryos.</text>
</comment>
<comment type="disruption phenotype">
    <text evidence="3">Abnormal vacuolar trafficking of soluble cargo proteins, and premature termination of the shoot apical meristem and of floral meristems. Plant missing both AGD5 and MTV1 are severely dwarfed, develop short siliques, exhibit abscission defect, and have altered subcellular distribution of clathrin-coated vesicle (CCV) cargo exported from the trans-Golgi network (TGN).</text>
</comment>
<comment type="sequence caution" evidence="5">
    <conflict type="erroneous gene model prediction">
        <sequence resource="EMBL-CDS" id="AAB63649"/>
    </conflict>
</comment>
<comment type="sequence caution" evidence="5">
    <conflict type="erroneous gene model prediction">
        <sequence resource="EMBL-CDS" id="BAB01267"/>
    </conflict>
</comment>
<gene>
    <name evidence="4" type="primary">MTV1</name>
    <name evidence="6" type="ordered locus">At3g16270</name>
    <name evidence="7" type="ORF">T02O04.23</name>
</gene>
<organism>
    <name type="scientific">Arabidopsis thaliana</name>
    <name type="common">Mouse-ear cress</name>
    <dbReference type="NCBI Taxonomy" id="3702"/>
    <lineage>
        <taxon>Eukaryota</taxon>
        <taxon>Viridiplantae</taxon>
        <taxon>Streptophyta</taxon>
        <taxon>Embryophyta</taxon>
        <taxon>Tracheophyta</taxon>
        <taxon>Spermatophyta</taxon>
        <taxon>Magnoliopsida</taxon>
        <taxon>eudicotyledons</taxon>
        <taxon>Gunneridae</taxon>
        <taxon>Pentapetalae</taxon>
        <taxon>rosids</taxon>
        <taxon>malvids</taxon>
        <taxon>Brassicales</taxon>
        <taxon>Brassicaceae</taxon>
        <taxon>Camelineae</taxon>
        <taxon>Arabidopsis</taxon>
    </lineage>
</organism>
<name>MTV1_ARATH</name>
<dbReference type="EMBL" id="AC001645">
    <property type="protein sequence ID" value="AAB63649.1"/>
    <property type="status" value="ALT_SEQ"/>
    <property type="molecule type" value="Genomic_DNA"/>
</dbReference>
<dbReference type="EMBL" id="AB023046">
    <property type="protein sequence ID" value="BAB01267.1"/>
    <property type="status" value="ALT_SEQ"/>
    <property type="molecule type" value="Genomic_DNA"/>
</dbReference>
<dbReference type="EMBL" id="CP002686">
    <property type="protein sequence ID" value="AEE75792.1"/>
    <property type="molecule type" value="Genomic_DNA"/>
</dbReference>
<dbReference type="EMBL" id="CP002686">
    <property type="protein sequence ID" value="ANM64206.1"/>
    <property type="molecule type" value="Genomic_DNA"/>
</dbReference>
<dbReference type="EMBL" id="CP002686">
    <property type="protein sequence ID" value="ANM64207.1"/>
    <property type="molecule type" value="Genomic_DNA"/>
</dbReference>
<dbReference type="EMBL" id="AF360245">
    <property type="protein sequence ID" value="AAK25955.1"/>
    <property type="molecule type" value="mRNA"/>
</dbReference>
<dbReference type="EMBL" id="AY040043">
    <property type="protein sequence ID" value="AAK64101.1"/>
    <property type="molecule type" value="mRNA"/>
</dbReference>
<dbReference type="EMBL" id="AK318965">
    <property type="protein sequence ID" value="BAH57080.1"/>
    <property type="molecule type" value="mRNA"/>
</dbReference>
<dbReference type="RefSeq" id="NP_001326251.1">
    <molecule id="Q9C5H4-1"/>
    <property type="nucleotide sequence ID" value="NM_001338225.1"/>
</dbReference>
<dbReference type="RefSeq" id="NP_001326252.1">
    <molecule id="Q9C5H4-1"/>
    <property type="nucleotide sequence ID" value="NM_001338226.1"/>
</dbReference>
<dbReference type="RefSeq" id="NP_566540.1">
    <molecule id="Q9C5H4-1"/>
    <property type="nucleotide sequence ID" value="NM_112498.4"/>
</dbReference>
<dbReference type="PDB" id="1VDY">
    <property type="method" value="NMR"/>
    <property type="chains" value="A=9-135"/>
</dbReference>
<dbReference type="PDB" id="2DCP">
    <property type="method" value="NMR"/>
    <property type="chains" value="A=9-135"/>
</dbReference>
<dbReference type="PDBsum" id="1VDY"/>
<dbReference type="PDBsum" id="2DCP"/>
<dbReference type="BMRB" id="Q9C5H4"/>
<dbReference type="SMR" id="Q9C5H4"/>
<dbReference type="BioGRID" id="6207">
    <property type="interactions" value="4"/>
</dbReference>
<dbReference type="FunCoup" id="Q9C5H4">
    <property type="interactions" value="1729"/>
</dbReference>
<dbReference type="IntAct" id="Q9C5H4">
    <property type="interactions" value="1"/>
</dbReference>
<dbReference type="STRING" id="3702.Q9C5H4"/>
<dbReference type="iPTMnet" id="Q9C5H4"/>
<dbReference type="PaxDb" id="3702-AT3G16270.1"/>
<dbReference type="ProteomicsDB" id="238489">
    <molecule id="Q9C5H4-1"/>
</dbReference>
<dbReference type="EnsemblPlants" id="AT3G16270.1">
    <molecule id="Q9C5H4-1"/>
    <property type="protein sequence ID" value="AT3G16270.1"/>
    <property type="gene ID" value="AT3G16270"/>
</dbReference>
<dbReference type="EnsemblPlants" id="AT3G16270.2">
    <molecule id="Q9C5H4-1"/>
    <property type="protein sequence ID" value="AT3G16270.2"/>
    <property type="gene ID" value="AT3G16270"/>
</dbReference>
<dbReference type="EnsemblPlants" id="AT3G16270.3">
    <molecule id="Q9C5H4-1"/>
    <property type="protein sequence ID" value="AT3G16270.3"/>
    <property type="gene ID" value="AT3G16270"/>
</dbReference>
<dbReference type="GeneID" id="820873"/>
<dbReference type="Gramene" id="AT3G16270.1">
    <molecule id="Q9C5H4-1"/>
    <property type="protein sequence ID" value="AT3G16270.1"/>
    <property type="gene ID" value="AT3G16270"/>
</dbReference>
<dbReference type="Gramene" id="AT3G16270.2">
    <molecule id="Q9C5H4-1"/>
    <property type="protein sequence ID" value="AT3G16270.2"/>
    <property type="gene ID" value="AT3G16270"/>
</dbReference>
<dbReference type="Gramene" id="AT3G16270.3">
    <molecule id="Q9C5H4-1"/>
    <property type="protein sequence ID" value="AT3G16270.3"/>
    <property type="gene ID" value="AT3G16270"/>
</dbReference>
<dbReference type="KEGG" id="ath:AT3G16270"/>
<dbReference type="Araport" id="AT3G16270"/>
<dbReference type="TAIR" id="AT3G16270"/>
<dbReference type="eggNOG" id="ENOG502QV38">
    <property type="taxonomic scope" value="Eukaryota"/>
</dbReference>
<dbReference type="HOGENOM" id="CLU_429860_0_0_1"/>
<dbReference type="InParanoid" id="Q9C5H4"/>
<dbReference type="OMA" id="FSIVHTY"/>
<dbReference type="OrthoDB" id="118154at2759"/>
<dbReference type="PhylomeDB" id="Q9C5H4"/>
<dbReference type="EvolutionaryTrace" id="Q9C5H4"/>
<dbReference type="PRO" id="PR:Q9C5H4"/>
<dbReference type="Proteomes" id="UP000006548">
    <property type="component" value="Chromosome 3"/>
</dbReference>
<dbReference type="ExpressionAtlas" id="Q9C5H4">
    <property type="expression patterns" value="baseline and differential"/>
</dbReference>
<dbReference type="GO" id="GO:0030136">
    <property type="term" value="C:clathrin-coated vesicle"/>
    <property type="evidence" value="ECO:0000314"/>
    <property type="project" value="UniProtKB"/>
</dbReference>
<dbReference type="GO" id="GO:0005768">
    <property type="term" value="C:endosome"/>
    <property type="evidence" value="ECO:0000314"/>
    <property type="project" value="TAIR"/>
</dbReference>
<dbReference type="GO" id="GO:0005802">
    <property type="term" value="C:trans-Golgi network"/>
    <property type="evidence" value="ECO:0000314"/>
    <property type="project" value="UniProtKB"/>
</dbReference>
<dbReference type="GO" id="GO:0030276">
    <property type="term" value="F:clathrin binding"/>
    <property type="evidence" value="ECO:0000314"/>
    <property type="project" value="UniProtKB"/>
</dbReference>
<dbReference type="GO" id="GO:0035091">
    <property type="term" value="F:phosphatidylinositol binding"/>
    <property type="evidence" value="ECO:0007669"/>
    <property type="project" value="InterPro"/>
</dbReference>
<dbReference type="GO" id="GO:0043130">
    <property type="term" value="F:ubiquitin binding"/>
    <property type="evidence" value="ECO:0007669"/>
    <property type="project" value="InterPro"/>
</dbReference>
<dbReference type="GO" id="GO:0035652">
    <property type="term" value="P:clathrin-coated vesicle cargo loading"/>
    <property type="evidence" value="ECO:0000315"/>
    <property type="project" value="UniProtKB"/>
</dbReference>
<dbReference type="CDD" id="cd03572">
    <property type="entry name" value="ENTH_like_Tepsin"/>
    <property type="match status" value="1"/>
</dbReference>
<dbReference type="Gene3D" id="1.25.40.90">
    <property type="match status" value="1"/>
</dbReference>
<dbReference type="InterPro" id="IPR016024">
    <property type="entry name" value="ARM-type_fold"/>
</dbReference>
<dbReference type="InterPro" id="IPR013809">
    <property type="entry name" value="ENTH"/>
</dbReference>
<dbReference type="InterPro" id="IPR035802">
    <property type="entry name" value="ENTH/VHS_tepsin"/>
</dbReference>
<dbReference type="InterPro" id="IPR008942">
    <property type="entry name" value="ENTH_VHS"/>
</dbReference>
<dbReference type="InterPro" id="IPR039273">
    <property type="entry name" value="TEPSIN"/>
</dbReference>
<dbReference type="InterPro" id="IPR002014">
    <property type="entry name" value="VHS_dom"/>
</dbReference>
<dbReference type="PANTHER" id="PTHR21514">
    <property type="entry name" value="AP-4 COMPLEX ACCESSORY SUBUNIT TEPSIN"/>
    <property type="match status" value="1"/>
</dbReference>
<dbReference type="PANTHER" id="PTHR21514:SF0">
    <property type="entry name" value="AP-4 COMPLEX ACCESSORY SUBUNIT TEPSIN"/>
    <property type="match status" value="1"/>
</dbReference>
<dbReference type="Pfam" id="PF01417">
    <property type="entry name" value="ENTH"/>
    <property type="match status" value="1"/>
</dbReference>
<dbReference type="SMART" id="SM00288">
    <property type="entry name" value="VHS"/>
    <property type="match status" value="1"/>
</dbReference>
<dbReference type="SUPFAM" id="SSF48371">
    <property type="entry name" value="ARM repeat"/>
    <property type="match status" value="1"/>
</dbReference>
<dbReference type="PROSITE" id="PS50179">
    <property type="entry name" value="VHS"/>
    <property type="match status" value="1"/>
</dbReference>
<sequence>MDTSRRAVESYWRSRMIDAVTSDEDKVAPVYKLEEICDLLRSSHVSIVKEFSEFILKRLDNKSPIVKQKALRLIKYAVGKSGSEFRREMQRNSVAVRNLFHYKGHPDPLKGDALNKAVRETAHETISAIFSEENGTKPAAPESINRRIEGFGNTNFQVPSNDNKSFLSEVVGIGSASIKQGISNFAQGHLPKKNENGSSSYRGPNLHRSLTMENENFSRYDPVKLGKDGNYGTSKNTTGGSWGHASGEASESSASVRVESKTREEKLLETIVTSGGVRLQPTRDALHVFILEAAKMDAVALSIALDGKLHSPMWQVRMKALCVLEAILRKKEDENFSIVHTYFSENLDAIQRCAESPQSSLREKANKVLSLLNGGQSSGLMSSSDNTVKREAAVDLPDLIDTGDSDDTLNNLNAIDTGSTVATAGPLMDDDWFGDSSDIGLSSSEKKTDDDPFADVSFHPNEEKESADDLFSGMTVGEKSAAVGGNHVPDLFDMFGSTAKLEAEPKDAKNINDLMGSFSIDENNSNQKGSSSSTLPQDLFAMPSTTSHQAPENPVGGILGSQNPGFIQNTMLPGGVMPFNFPQGMMMNPAFASQPLNYAAMASLLAQQQQYLGNMSNFQQFGNLNAQGSGNVLSMGTSGGNQSALPDIFQPNFGNQAPTSTMNGSKKEDTRAFDFISDHLTSARDTKRVS</sequence>
<protein>
    <recommendedName>
        <fullName evidence="4">Protein MODIFIED TRANSPORT TO THE VACUOLE 1</fullName>
    </recommendedName>
</protein>
<reference key="1">
    <citation type="journal article" date="2000" name="Nature">
        <title>Sequence and analysis of chromosome 3 of the plant Arabidopsis thaliana.</title>
        <authorList>
            <person name="Salanoubat M."/>
            <person name="Lemcke K."/>
            <person name="Rieger M."/>
            <person name="Ansorge W."/>
            <person name="Unseld M."/>
            <person name="Fartmann B."/>
            <person name="Valle G."/>
            <person name="Bloecker H."/>
            <person name="Perez-Alonso M."/>
            <person name="Obermaier B."/>
            <person name="Delseny M."/>
            <person name="Boutry M."/>
            <person name="Grivell L.A."/>
            <person name="Mache R."/>
            <person name="Puigdomenech P."/>
            <person name="De Simone V."/>
            <person name="Choisne N."/>
            <person name="Artiguenave F."/>
            <person name="Robert C."/>
            <person name="Brottier P."/>
            <person name="Wincker P."/>
            <person name="Cattolico L."/>
            <person name="Weissenbach J."/>
            <person name="Saurin W."/>
            <person name="Quetier F."/>
            <person name="Schaefer M."/>
            <person name="Mueller-Auer S."/>
            <person name="Gabel C."/>
            <person name="Fuchs M."/>
            <person name="Benes V."/>
            <person name="Wurmbach E."/>
            <person name="Drzonek H."/>
            <person name="Erfle H."/>
            <person name="Jordan N."/>
            <person name="Bangert S."/>
            <person name="Wiedelmann R."/>
            <person name="Kranz H."/>
            <person name="Voss H."/>
            <person name="Holland R."/>
            <person name="Brandt P."/>
            <person name="Nyakatura G."/>
            <person name="Vezzi A."/>
            <person name="D'Angelo M."/>
            <person name="Pallavicini A."/>
            <person name="Toppo S."/>
            <person name="Simionati B."/>
            <person name="Conrad A."/>
            <person name="Hornischer K."/>
            <person name="Kauer G."/>
            <person name="Loehnert T.-H."/>
            <person name="Nordsiek G."/>
            <person name="Reichelt J."/>
            <person name="Scharfe M."/>
            <person name="Schoen O."/>
            <person name="Bargues M."/>
            <person name="Terol J."/>
            <person name="Climent J."/>
            <person name="Navarro P."/>
            <person name="Collado C."/>
            <person name="Perez-Perez A."/>
            <person name="Ottenwaelder B."/>
            <person name="Duchemin D."/>
            <person name="Cooke R."/>
            <person name="Laudie M."/>
            <person name="Berger-Llauro C."/>
            <person name="Purnelle B."/>
            <person name="Masuy D."/>
            <person name="de Haan M."/>
            <person name="Maarse A.C."/>
            <person name="Alcaraz J.-P."/>
            <person name="Cottet A."/>
            <person name="Casacuberta E."/>
            <person name="Monfort A."/>
            <person name="Argiriou A."/>
            <person name="Flores M."/>
            <person name="Liguori R."/>
            <person name="Vitale D."/>
            <person name="Mannhaupt G."/>
            <person name="Haase D."/>
            <person name="Schoof H."/>
            <person name="Rudd S."/>
            <person name="Zaccaria P."/>
            <person name="Mewes H.-W."/>
            <person name="Mayer K.F.X."/>
            <person name="Kaul S."/>
            <person name="Town C.D."/>
            <person name="Koo H.L."/>
            <person name="Tallon L.J."/>
            <person name="Jenkins J."/>
            <person name="Rooney T."/>
            <person name="Rizzo M."/>
            <person name="Walts A."/>
            <person name="Utterback T."/>
            <person name="Fujii C.Y."/>
            <person name="Shea T.P."/>
            <person name="Creasy T.H."/>
            <person name="Haas B."/>
            <person name="Maiti R."/>
            <person name="Wu D."/>
            <person name="Peterson J."/>
            <person name="Van Aken S."/>
            <person name="Pai G."/>
            <person name="Militscher J."/>
            <person name="Sellers P."/>
            <person name="Gill J.E."/>
            <person name="Feldblyum T.V."/>
            <person name="Preuss D."/>
            <person name="Lin X."/>
            <person name="Nierman W.C."/>
            <person name="Salzberg S.L."/>
            <person name="White O."/>
            <person name="Venter J.C."/>
            <person name="Fraser C.M."/>
            <person name="Kaneko T."/>
            <person name="Nakamura Y."/>
            <person name="Sato S."/>
            <person name="Kato T."/>
            <person name="Asamizu E."/>
            <person name="Sasamoto S."/>
            <person name="Kimura T."/>
            <person name="Idesawa K."/>
            <person name="Kawashima K."/>
            <person name="Kishida Y."/>
            <person name="Kiyokawa C."/>
            <person name="Kohara M."/>
            <person name="Matsumoto M."/>
            <person name="Matsuno A."/>
            <person name="Muraki A."/>
            <person name="Nakayama S."/>
            <person name="Nakazaki N."/>
            <person name="Shinpo S."/>
            <person name="Takeuchi C."/>
            <person name="Wada T."/>
            <person name="Watanabe A."/>
            <person name="Yamada M."/>
            <person name="Yasuda M."/>
            <person name="Tabata S."/>
        </authorList>
    </citation>
    <scope>NUCLEOTIDE SEQUENCE [LARGE SCALE GENOMIC DNA]</scope>
    <source>
        <strain>cv. Columbia</strain>
    </source>
</reference>
<reference key="2">
    <citation type="journal article" date="2000" name="DNA Res.">
        <title>Structural analysis of Arabidopsis thaliana chromosome 3. I. Sequence features of the regions of 4,504,864 bp covered by sixty P1 and TAC clones.</title>
        <authorList>
            <person name="Sato S."/>
            <person name="Nakamura Y."/>
            <person name="Kaneko T."/>
            <person name="Katoh T."/>
            <person name="Asamizu E."/>
            <person name="Tabata S."/>
        </authorList>
    </citation>
    <scope>NUCLEOTIDE SEQUENCE [LARGE SCALE GENOMIC DNA]</scope>
    <source>
        <strain>cv. Columbia</strain>
    </source>
</reference>
<reference key="3">
    <citation type="journal article" date="2017" name="Plant J.">
        <title>Araport11: a complete reannotation of the Arabidopsis thaliana reference genome.</title>
        <authorList>
            <person name="Cheng C.Y."/>
            <person name="Krishnakumar V."/>
            <person name="Chan A.P."/>
            <person name="Thibaud-Nissen F."/>
            <person name="Schobel S."/>
            <person name="Town C.D."/>
        </authorList>
    </citation>
    <scope>GENOME REANNOTATION</scope>
    <source>
        <strain>cv. Columbia</strain>
    </source>
</reference>
<reference key="4">
    <citation type="journal article" date="2003" name="Science">
        <title>Empirical analysis of transcriptional activity in the Arabidopsis genome.</title>
        <authorList>
            <person name="Yamada K."/>
            <person name="Lim J."/>
            <person name="Dale J.M."/>
            <person name="Chen H."/>
            <person name="Shinn P."/>
            <person name="Palm C.J."/>
            <person name="Southwick A.M."/>
            <person name="Wu H.C."/>
            <person name="Kim C.J."/>
            <person name="Nguyen M."/>
            <person name="Pham P.K."/>
            <person name="Cheuk R.F."/>
            <person name="Karlin-Newmann G."/>
            <person name="Liu S.X."/>
            <person name="Lam B."/>
            <person name="Sakano H."/>
            <person name="Wu T."/>
            <person name="Yu G."/>
            <person name="Miranda M."/>
            <person name="Quach H.L."/>
            <person name="Tripp M."/>
            <person name="Chang C.H."/>
            <person name="Lee J.M."/>
            <person name="Toriumi M.J."/>
            <person name="Chan M.M."/>
            <person name="Tang C.C."/>
            <person name="Onodera C.S."/>
            <person name="Deng J.M."/>
            <person name="Akiyama K."/>
            <person name="Ansari Y."/>
            <person name="Arakawa T."/>
            <person name="Banh J."/>
            <person name="Banno F."/>
            <person name="Bowser L."/>
            <person name="Brooks S.Y."/>
            <person name="Carninci P."/>
            <person name="Chao Q."/>
            <person name="Choy N."/>
            <person name="Enju A."/>
            <person name="Goldsmith A.D."/>
            <person name="Gurjal M."/>
            <person name="Hansen N.F."/>
            <person name="Hayashizaki Y."/>
            <person name="Johnson-Hopson C."/>
            <person name="Hsuan V.W."/>
            <person name="Iida K."/>
            <person name="Karnes M."/>
            <person name="Khan S."/>
            <person name="Koesema E."/>
            <person name="Ishida J."/>
            <person name="Jiang P.X."/>
            <person name="Jones T."/>
            <person name="Kawai J."/>
            <person name="Kamiya A."/>
            <person name="Meyers C."/>
            <person name="Nakajima M."/>
            <person name="Narusaka M."/>
            <person name="Seki M."/>
            <person name="Sakurai T."/>
            <person name="Satou M."/>
            <person name="Tamse R."/>
            <person name="Vaysberg M."/>
            <person name="Wallender E.K."/>
            <person name="Wong C."/>
            <person name="Yamamura Y."/>
            <person name="Yuan S."/>
            <person name="Shinozaki K."/>
            <person name="Davis R.W."/>
            <person name="Theologis A."/>
            <person name="Ecker J.R."/>
        </authorList>
    </citation>
    <scope>NUCLEOTIDE SEQUENCE [LARGE SCALE MRNA]</scope>
    <source>
        <strain>cv. Columbia</strain>
    </source>
</reference>
<reference key="5">
    <citation type="journal article" date="2009" name="DNA Res.">
        <title>Analysis of multiple occurrences of alternative splicing events in Arabidopsis thaliana using novel sequenced full-length cDNAs.</title>
        <authorList>
            <person name="Iida K."/>
            <person name="Fukami-Kobayashi K."/>
            <person name="Toyoda A."/>
            <person name="Sakaki Y."/>
            <person name="Kobayashi M."/>
            <person name="Seki M."/>
            <person name="Shinozaki K."/>
        </authorList>
    </citation>
    <scope>NUCLEOTIDE SEQUENCE [LARGE SCALE MRNA] (ISOFORM 2)</scope>
    <source>
        <tissue>Rosette leaf</tissue>
    </source>
</reference>
<reference key="6">
    <citation type="journal article" date="2009" name="J. Proteomics">
        <title>Phosphoproteomic analysis of nuclei-enriched fractions from Arabidopsis thaliana.</title>
        <authorList>
            <person name="Jones A.M.E."/>
            <person name="MacLean D."/>
            <person name="Studholme D.J."/>
            <person name="Serna-Sanz A."/>
            <person name="Andreasson E."/>
            <person name="Rathjen J.P."/>
            <person name="Peck S.C."/>
        </authorList>
    </citation>
    <scope>IDENTIFICATION BY MASS SPECTROMETRY [LARGE SCALE ANALYSIS]</scope>
    <source>
        <strain>cv. Columbia</strain>
    </source>
</reference>
<reference key="7">
    <citation type="journal article" date="2009" name="Plant Physiol.">
        <title>Large-scale Arabidopsis phosphoproteome profiling reveals novel chloroplast kinase substrates and phosphorylation networks.</title>
        <authorList>
            <person name="Reiland S."/>
            <person name="Messerli G."/>
            <person name="Baerenfaller K."/>
            <person name="Gerrits B."/>
            <person name="Endler A."/>
            <person name="Grossmann J."/>
            <person name="Gruissem W."/>
            <person name="Baginsky S."/>
        </authorList>
    </citation>
    <scope>IDENTIFICATION BY MASS SPECTROMETRY [LARGE SCALE ANALYSIS]</scope>
</reference>
<reference key="8">
    <citation type="journal article" date="2013" name="Plant Cell">
        <title>MTV1 and MTV4 encode plant-specific ENTH and ARF GAP proteins that mediate clathrin-dependent trafficking of vacuolar cargo from the trans-Golgi network.</title>
        <authorList>
            <person name="Sauer M."/>
            <person name="Delgadillo M.O."/>
            <person name="Zouhar J."/>
            <person name="Reynolds G.D."/>
            <person name="Pennington J.G."/>
            <person name="Jiang L."/>
            <person name="Liljegren S.J."/>
            <person name="Stierhof Y.-D."/>
            <person name="De Jaeger G."/>
            <person name="Otegui M.S."/>
            <person name="Bednarek S.Y."/>
            <person name="Rojo E."/>
        </authorList>
    </citation>
    <scope>FUNCTION</scope>
    <scope>DISRUPTION PHENOTYPE</scope>
    <scope>SUBCELLULAR LOCATION</scope>
    <scope>INTERACTION WITH CLATHRIN</scope>
    <scope>TISSUE SPECIFICITY</scope>
    <scope>DEVELOPMENTAL STAGE</scope>
    <source>
        <strain>cv. Columbia</strain>
    </source>
</reference>
<reference key="9">
    <citation type="journal article" date="2004" name="J. Biomol. NMR">
        <title>NMR assignment of the hypothetical ENTH-VHS domain At3g16270 from Arabidopsis thaliana.</title>
        <authorList>
            <person name="Lopez-Mendez B."/>
            <person name="Pantoja-Uceda D."/>
            <person name="Tomizawa T."/>
            <person name="Koshiba S."/>
            <person name="Kigawa T."/>
            <person name="Shirouzu M."/>
            <person name="Terada T."/>
            <person name="Inoue M."/>
            <person name="Yabuki T."/>
            <person name="Aoki M."/>
            <person name="Seki E."/>
            <person name="Matsuda T."/>
            <person name="Hirota H."/>
            <person name="Yoshida M."/>
            <person name="Tanaka A."/>
            <person name="Osanai T."/>
            <person name="Seki M."/>
            <person name="Shinozaki K."/>
            <person name="Yokoyama S."/>
            <person name="Guntert P."/>
        </authorList>
    </citation>
    <scope>STRUCTURE BY NMR OF 9-135</scope>
</reference>
<reference key="10">
    <citation type="journal article" date="2006" name="J. Am. Chem. Soc.">
        <title>Automated protein structure determination from NMR spectra.</title>
        <authorList>
            <person name="Lopez-Mendez B."/>
            <person name="Guntert P."/>
        </authorList>
    </citation>
    <scope>STRUCTURE BY NMR OF 9-135</scope>
</reference>
<keyword id="KW-0002">3D-structure</keyword>
<keyword id="KW-0025">Alternative splicing</keyword>
<keyword id="KW-0968">Cytoplasmic vesicle</keyword>
<keyword id="KW-0333">Golgi apparatus</keyword>
<keyword id="KW-1185">Reference proteome</keyword>
<proteinExistence type="evidence at protein level"/>
<accession>Q9C5H4</accession>
<accession>C0Z301</accession>
<accession>O04329</accession>
<accession>Q9LU19</accession>
<feature type="chain" id="PRO_0000278823" description="Protein MODIFIED TRANSPORT TO THE VACUOLE 1">
    <location>
        <begin position="1"/>
        <end position="690"/>
    </location>
</feature>
<feature type="domain" description="VHS" evidence="1">
    <location>
        <begin position="20"/>
        <end position="150"/>
    </location>
</feature>
<feature type="region of interest" description="Disordered" evidence="2">
    <location>
        <begin position="228"/>
        <end position="258"/>
    </location>
</feature>
<feature type="region of interest" description="Disordered" evidence="2">
    <location>
        <begin position="518"/>
        <end position="551"/>
    </location>
</feature>
<feature type="compositionally biased region" description="Low complexity" evidence="2">
    <location>
        <begin position="243"/>
        <end position="257"/>
    </location>
</feature>
<feature type="compositionally biased region" description="Polar residues" evidence="2">
    <location>
        <begin position="520"/>
        <end position="536"/>
    </location>
</feature>
<feature type="splice variant" id="VSP_059635" description="In isoform 2.">
    <original>DHLTSARDTKRVS</original>
    <variation>VSFAILLLIFDSKVWSICHLSLYM</variation>
    <location>
        <begin position="678"/>
        <end position="690"/>
    </location>
</feature>
<feature type="helix" evidence="8">
    <location>
        <begin position="10"/>
        <end position="19"/>
    </location>
</feature>
<feature type="strand" evidence="9">
    <location>
        <begin position="23"/>
        <end position="26"/>
    </location>
</feature>
<feature type="helix" evidence="8">
    <location>
        <begin position="30"/>
        <end position="42"/>
    </location>
</feature>
<feature type="helix" evidence="8">
    <location>
        <begin position="45"/>
        <end position="59"/>
    </location>
</feature>
<feature type="strand" evidence="8">
    <location>
        <begin position="61"/>
        <end position="63"/>
    </location>
</feature>
<feature type="helix" evidence="8">
    <location>
        <begin position="64"/>
        <end position="77"/>
    </location>
</feature>
<feature type="turn" evidence="8">
    <location>
        <begin position="78"/>
        <end position="80"/>
    </location>
</feature>
<feature type="helix" evidence="8">
    <location>
        <begin position="83"/>
        <end position="91"/>
    </location>
</feature>
<feature type="helix" evidence="8">
    <location>
        <begin position="94"/>
        <end position="97"/>
    </location>
</feature>
<feature type="turn" evidence="8">
    <location>
        <begin position="98"/>
        <end position="101"/>
    </location>
</feature>
<feature type="turn" evidence="8">
    <location>
        <begin position="108"/>
        <end position="110"/>
    </location>
</feature>
<feature type="helix" evidence="8">
    <location>
        <begin position="114"/>
        <end position="129"/>
    </location>
</feature>